<evidence type="ECO:0000255" key="1">
    <source>
        <dbReference type="HAMAP-Rule" id="MF_01050"/>
    </source>
</evidence>
<protein>
    <recommendedName>
        <fullName evidence="1">L-carnitine CoA-transferase</fullName>
        <ecNumber evidence="1">2.8.3.21</ecNumber>
    </recommendedName>
    <alternativeName>
        <fullName evidence="1">Crotonobetainyl-CoA:carnitine CoA-transferase</fullName>
    </alternativeName>
</protein>
<name>CAIB_ECO55</name>
<reference key="1">
    <citation type="journal article" date="2009" name="PLoS Genet.">
        <title>Organised genome dynamics in the Escherichia coli species results in highly diverse adaptive paths.</title>
        <authorList>
            <person name="Touchon M."/>
            <person name="Hoede C."/>
            <person name="Tenaillon O."/>
            <person name="Barbe V."/>
            <person name="Baeriswyl S."/>
            <person name="Bidet P."/>
            <person name="Bingen E."/>
            <person name="Bonacorsi S."/>
            <person name="Bouchier C."/>
            <person name="Bouvet O."/>
            <person name="Calteau A."/>
            <person name="Chiapello H."/>
            <person name="Clermont O."/>
            <person name="Cruveiller S."/>
            <person name="Danchin A."/>
            <person name="Diard M."/>
            <person name="Dossat C."/>
            <person name="Karoui M.E."/>
            <person name="Frapy E."/>
            <person name="Garry L."/>
            <person name="Ghigo J.M."/>
            <person name="Gilles A.M."/>
            <person name="Johnson J."/>
            <person name="Le Bouguenec C."/>
            <person name="Lescat M."/>
            <person name="Mangenot S."/>
            <person name="Martinez-Jehanne V."/>
            <person name="Matic I."/>
            <person name="Nassif X."/>
            <person name="Oztas S."/>
            <person name="Petit M.A."/>
            <person name="Pichon C."/>
            <person name="Rouy Z."/>
            <person name="Ruf C.S."/>
            <person name="Schneider D."/>
            <person name="Tourret J."/>
            <person name="Vacherie B."/>
            <person name="Vallenet D."/>
            <person name="Medigue C."/>
            <person name="Rocha E.P.C."/>
            <person name="Denamur E."/>
        </authorList>
    </citation>
    <scope>NUCLEOTIDE SEQUENCE [LARGE SCALE GENOMIC DNA]</scope>
    <source>
        <strain>55989 / EAEC</strain>
    </source>
</reference>
<gene>
    <name evidence="1" type="primary">caiB</name>
    <name type="ordered locus">EC55989_0038</name>
</gene>
<organism>
    <name type="scientific">Escherichia coli (strain 55989 / EAEC)</name>
    <dbReference type="NCBI Taxonomy" id="585055"/>
    <lineage>
        <taxon>Bacteria</taxon>
        <taxon>Pseudomonadati</taxon>
        <taxon>Pseudomonadota</taxon>
        <taxon>Gammaproteobacteria</taxon>
        <taxon>Enterobacterales</taxon>
        <taxon>Enterobacteriaceae</taxon>
        <taxon>Escherichia</taxon>
    </lineage>
</organism>
<comment type="function">
    <text evidence="1">Catalyzes the reversible transfer of the CoA moiety from gamma-butyrobetainyl-CoA to L-carnitine to generate L-carnitinyl-CoA and gamma-butyrobetaine. Is also able to catalyze the reversible transfer of the CoA moiety from gamma-butyrobetainyl-CoA or L-carnitinyl-CoA to crotonobetaine to generate crotonobetainyl-CoA.</text>
</comment>
<comment type="catalytic activity">
    <reaction evidence="1">
        <text>crotonobetainyl-CoA + (R)-carnitine = crotonobetaine + (R)-carnitinyl-CoA</text>
        <dbReference type="Rhea" id="RHEA:28526"/>
        <dbReference type="ChEBI" id="CHEBI:16347"/>
        <dbReference type="ChEBI" id="CHEBI:17237"/>
        <dbReference type="ChEBI" id="CHEBI:60932"/>
        <dbReference type="ChEBI" id="CHEBI:60933"/>
        <dbReference type="EC" id="2.8.3.21"/>
    </reaction>
</comment>
<comment type="catalytic activity">
    <reaction evidence="1">
        <text>4-(trimethylamino)butanoyl-CoA + (R)-carnitine = (R)-carnitinyl-CoA + 4-(trimethylamino)butanoate</text>
        <dbReference type="Rhea" id="RHEA:28418"/>
        <dbReference type="ChEBI" id="CHEBI:16244"/>
        <dbReference type="ChEBI" id="CHEBI:16347"/>
        <dbReference type="ChEBI" id="CHEBI:60932"/>
        <dbReference type="ChEBI" id="CHEBI:61513"/>
        <dbReference type="EC" id="2.8.3.21"/>
    </reaction>
</comment>
<comment type="pathway">
    <text evidence="1">Amine and polyamine metabolism; carnitine metabolism.</text>
</comment>
<comment type="subunit">
    <text evidence="1">Homodimer.</text>
</comment>
<comment type="subcellular location">
    <subcellularLocation>
        <location evidence="1">Cytoplasm</location>
    </subcellularLocation>
</comment>
<comment type="similarity">
    <text evidence="1">Belongs to the CoA-transferase III family. CaiB subfamily.</text>
</comment>
<keyword id="KW-0963">Cytoplasm</keyword>
<keyword id="KW-1185">Reference proteome</keyword>
<keyword id="KW-0808">Transferase</keyword>
<proteinExistence type="inferred from homology"/>
<feature type="chain" id="PRO_1000149623" description="L-carnitine CoA-transferase">
    <location>
        <begin position="1"/>
        <end position="405"/>
    </location>
</feature>
<feature type="active site" description="Nucleophile" evidence="1">
    <location>
        <position position="169"/>
    </location>
</feature>
<feature type="binding site" evidence="1">
    <location>
        <position position="97"/>
    </location>
    <ligand>
        <name>CoA</name>
        <dbReference type="ChEBI" id="CHEBI:57287"/>
    </ligand>
</feature>
<feature type="binding site" evidence="1">
    <location>
        <position position="104"/>
    </location>
    <ligand>
        <name>CoA</name>
        <dbReference type="ChEBI" id="CHEBI:57287"/>
    </ligand>
</feature>
<accession>B7L4G1</accession>
<dbReference type="EC" id="2.8.3.21" evidence="1"/>
<dbReference type="EMBL" id="CU928145">
    <property type="protein sequence ID" value="CAU95925.1"/>
    <property type="molecule type" value="Genomic_DNA"/>
</dbReference>
<dbReference type="RefSeq" id="WP_000349932.1">
    <property type="nucleotide sequence ID" value="NC_011748.1"/>
</dbReference>
<dbReference type="SMR" id="B7L4G1"/>
<dbReference type="GeneID" id="75169937"/>
<dbReference type="KEGG" id="eck:EC55989_0038"/>
<dbReference type="HOGENOM" id="CLU_033975_2_0_6"/>
<dbReference type="UniPathway" id="UPA00117"/>
<dbReference type="Proteomes" id="UP000000746">
    <property type="component" value="Chromosome"/>
</dbReference>
<dbReference type="GO" id="GO:0005737">
    <property type="term" value="C:cytoplasm"/>
    <property type="evidence" value="ECO:0007669"/>
    <property type="project" value="UniProtKB-SubCell"/>
</dbReference>
<dbReference type="GO" id="GO:0008735">
    <property type="term" value="F:L-carnitine CoA-transferase activity"/>
    <property type="evidence" value="ECO:0007669"/>
    <property type="project" value="RHEA"/>
</dbReference>
<dbReference type="GO" id="GO:0009437">
    <property type="term" value="P:carnitine metabolic process"/>
    <property type="evidence" value="ECO:0007669"/>
    <property type="project" value="UniProtKB-UniRule"/>
</dbReference>
<dbReference type="FunFam" id="3.30.1540.10:FF:000001">
    <property type="entry name" value="L-carnitine CoA-transferase"/>
    <property type="match status" value="1"/>
</dbReference>
<dbReference type="Gene3D" id="3.40.50.10540">
    <property type="entry name" value="Crotonobetainyl-coa:carnitine coa-transferase, domain 1"/>
    <property type="match status" value="1"/>
</dbReference>
<dbReference type="Gene3D" id="3.30.1540.10">
    <property type="entry name" value="formyl-coa transferase, domain 3"/>
    <property type="match status" value="1"/>
</dbReference>
<dbReference type="HAMAP" id="MF_01050">
    <property type="entry name" value="CaiB"/>
    <property type="match status" value="1"/>
</dbReference>
<dbReference type="InterPro" id="IPR050509">
    <property type="entry name" value="CoA-transferase_III"/>
</dbReference>
<dbReference type="InterPro" id="IPR023452">
    <property type="entry name" value="CoA-Trfase_CaiB"/>
</dbReference>
<dbReference type="InterPro" id="IPR003673">
    <property type="entry name" value="CoA-Trfase_fam_III"/>
</dbReference>
<dbReference type="InterPro" id="IPR044855">
    <property type="entry name" value="CoA-Trfase_III_dom3_sf"/>
</dbReference>
<dbReference type="InterPro" id="IPR023606">
    <property type="entry name" value="CoA-Trfase_III_dom_1_sf"/>
</dbReference>
<dbReference type="NCBIfam" id="NF002914">
    <property type="entry name" value="PRK03525.1"/>
    <property type="match status" value="1"/>
</dbReference>
<dbReference type="PANTHER" id="PTHR48228:SF6">
    <property type="entry name" value="L-CARNITINE COA-TRANSFERASE"/>
    <property type="match status" value="1"/>
</dbReference>
<dbReference type="PANTHER" id="PTHR48228">
    <property type="entry name" value="SUCCINYL-COA--D-CITRAMALATE COA-TRANSFERASE"/>
    <property type="match status" value="1"/>
</dbReference>
<dbReference type="Pfam" id="PF02515">
    <property type="entry name" value="CoA_transf_3"/>
    <property type="match status" value="1"/>
</dbReference>
<dbReference type="SUPFAM" id="SSF89796">
    <property type="entry name" value="CoA-transferase family III (CaiB/BaiF)"/>
    <property type="match status" value="1"/>
</dbReference>
<sequence length="405" mass="45097">MDHLPMPKFGPLAGLRVVFSGIEIAGPFAGQMFAEWGAEVIWIENVAWADTIRVQPNYPQLSRRNLHALSLNIFKDEGREAFLKLMETTDIFIEASKGPAFARRGITDEVLWQHNPKLVIAHLSGFGQYGTEEYTNLPAYNTIAQAFSGYLIQNGDVDQPMPAFPYTADYFSGLTATTAALAALHKVRETGKGESIDIAMYEVMLRMGQYFMMDYFNGGEMCPRMSKGKDPYYAGCGLYKCADGYIVMELVGITQIEECFKDIGLAHLLGTPEIPEGTQLIHRIECPYGPLVEEKLDAWLAAHTIAEVKERFAELNIACAKVLTVPELESNPQYVARESITQWQTMDGRTCKGPNIMPKFKNNPGQIWRGMPSHGMDTAAILKNIGYSENDIQELVSKGLAKVED</sequence>